<name>RPOB_STRS2</name>
<organism>
    <name type="scientific">Streptococcus suis (strain 98HAH33)</name>
    <dbReference type="NCBI Taxonomy" id="391296"/>
    <lineage>
        <taxon>Bacteria</taxon>
        <taxon>Bacillati</taxon>
        <taxon>Bacillota</taxon>
        <taxon>Bacilli</taxon>
        <taxon>Lactobacillales</taxon>
        <taxon>Streptococcaceae</taxon>
        <taxon>Streptococcus</taxon>
    </lineage>
</organism>
<feature type="chain" id="PRO_0000300416" description="DNA-directed RNA polymerase subunit beta">
    <location>
        <begin position="1"/>
        <end position="1190"/>
    </location>
</feature>
<evidence type="ECO:0000255" key="1">
    <source>
        <dbReference type="HAMAP-Rule" id="MF_01321"/>
    </source>
</evidence>
<proteinExistence type="inferred from homology"/>
<reference key="1">
    <citation type="journal article" date="2007" name="PLoS ONE">
        <title>A glimpse of streptococcal toxic shock syndrome from comparative genomics of S. suis 2 Chinese isolates.</title>
        <authorList>
            <person name="Chen C."/>
            <person name="Tang J."/>
            <person name="Dong W."/>
            <person name="Wang C."/>
            <person name="Feng Y."/>
            <person name="Wang J."/>
            <person name="Zheng F."/>
            <person name="Pan X."/>
            <person name="Liu D."/>
            <person name="Li M."/>
            <person name="Song Y."/>
            <person name="Zhu X."/>
            <person name="Sun H."/>
            <person name="Feng T."/>
            <person name="Guo Z."/>
            <person name="Ju A."/>
            <person name="Ge J."/>
            <person name="Dong Y."/>
            <person name="Sun W."/>
            <person name="Jiang Y."/>
            <person name="Wang J."/>
            <person name="Yan J."/>
            <person name="Yang H."/>
            <person name="Wang X."/>
            <person name="Gao G.F."/>
            <person name="Yang R."/>
            <person name="Wang J."/>
            <person name="Yu J."/>
        </authorList>
    </citation>
    <scope>NUCLEOTIDE SEQUENCE [LARGE SCALE GENOMIC DNA]</scope>
    <source>
        <strain>98HAH33</strain>
    </source>
</reference>
<sequence>MAGHEVQYGKHRTRRSFSRIKEVLDLPNLIEIQTDSFQDFLDYGLKEVFEDVLPVSNFTDTMELEFVGYELKEPKYTLEEARAHDANYSAPIYVTFRLVNKETGEIKTQEVFFGEFPIMTEMGTFIINGAERIIVSQLVRSPGVYFNDKVDKNGKVGYGSTVIPNRGAWLELETDSKDIAYTRIDRTRKIPFTTLVRALGFSGDDEIFDIFGDSELVRNTIEKDIHKNPADSRTDEALKEIYERLRPGEPKTAESSRSLLTARFFDPRRYDLAPVGRYKINKKLNLRTRLLNQTLAEHVINGETGEIVLEAGTVLSRDVLEKVEAQFDELNLVEYIPNDNAVLLEPVLLQKFKIVAPKDPERVVTVIGNANPAENVRTVTPADILAEMSYFLNLAEGLGRVDDIDHLGNRRIRAVGELLANQVRIGLTRMERNLRERMSVQDNEVLTPQQIINIRPVTAAIKEFFGSSQLSQFMDQHNPLSELSHKRRLSALGPGGLTRDRAGYEVRDVHYTHYGRMCPIETPEGPNIGLINNLSSYGHLNKYGFIQTPYRKIDRATGTVTNEIVWLTADEEDAYIVAQSTSPLDENNRFVDKIVMGRHQGNNQEFPADSADFMDVSPKQVVAVATACIPFLENDDSNRALMGANMQRQAVPLIDPKAPYVGTGMEYQAAHDSGAAIIAQHDGKVVYADADKVEVRREDGSLDVYHISKFRRSNSGTAYNQRTLVKLGDIVEKGDFIADGPSMENGEMALGQNPIVAYMTWEGYNFEDAVIMSERLVKDDVYTSVHLEEYESETRDTKLGPEEITREIPNVGEDALRNLDEMGIIRIGAEVKEGDILVGKVTPKGEKDLSAEERLLHAIFGDKSREVRDTSLRVPHGADGVVRDVKIFTRANGDELQSGVNMLVRVYIAQKRKIKVGDKMAGRHGNKGVVSRIVPVEDMPYLPDGTPVDIMLNPLGVPSRMNIGQVMELHLGMAARNLGIHIATPVFDGASSEDLWSTVKEAGMDSDAKTILYDGRTGEPFDNRVSVGVMYMIKLHHMVDDKLHARSVGPYSLVTQQPLGGKAQFGGQRFGEMEVWALEAYGASNVLQEILTYKSDDVTGRLKAYEAITKGKPIPKPGVPESFRVLVKELQSLGLDMRVLDEDNNEVELRDLDEGEDDDIIHVDDLEKARAKAAADAAAAFAAEEAEGKE</sequence>
<gene>
    <name evidence="1" type="primary">rpoB</name>
    <name type="ordered locus">SSU98_0122</name>
</gene>
<dbReference type="EC" id="2.7.7.6" evidence="1"/>
<dbReference type="EMBL" id="CP000408">
    <property type="protein sequence ID" value="ABP91282.1"/>
    <property type="molecule type" value="Genomic_DNA"/>
</dbReference>
<dbReference type="SMR" id="A4VYU3"/>
<dbReference type="KEGG" id="ssv:SSU98_0122"/>
<dbReference type="HOGENOM" id="CLU_000524_4_1_9"/>
<dbReference type="GO" id="GO:0000428">
    <property type="term" value="C:DNA-directed RNA polymerase complex"/>
    <property type="evidence" value="ECO:0007669"/>
    <property type="project" value="UniProtKB-KW"/>
</dbReference>
<dbReference type="GO" id="GO:0003677">
    <property type="term" value="F:DNA binding"/>
    <property type="evidence" value="ECO:0007669"/>
    <property type="project" value="UniProtKB-UniRule"/>
</dbReference>
<dbReference type="GO" id="GO:0003899">
    <property type="term" value="F:DNA-directed RNA polymerase activity"/>
    <property type="evidence" value="ECO:0007669"/>
    <property type="project" value="UniProtKB-UniRule"/>
</dbReference>
<dbReference type="GO" id="GO:0032549">
    <property type="term" value="F:ribonucleoside binding"/>
    <property type="evidence" value="ECO:0007669"/>
    <property type="project" value="InterPro"/>
</dbReference>
<dbReference type="GO" id="GO:0006351">
    <property type="term" value="P:DNA-templated transcription"/>
    <property type="evidence" value="ECO:0007669"/>
    <property type="project" value="UniProtKB-UniRule"/>
</dbReference>
<dbReference type="CDD" id="cd00653">
    <property type="entry name" value="RNA_pol_B_RPB2"/>
    <property type="match status" value="1"/>
</dbReference>
<dbReference type="Gene3D" id="2.40.50.100">
    <property type="match status" value="1"/>
</dbReference>
<dbReference type="Gene3D" id="2.40.50.150">
    <property type="match status" value="1"/>
</dbReference>
<dbReference type="Gene3D" id="3.90.1100.10">
    <property type="match status" value="3"/>
</dbReference>
<dbReference type="Gene3D" id="2.40.270.10">
    <property type="entry name" value="DNA-directed RNA polymerase, subunit 2, domain 6"/>
    <property type="match status" value="1"/>
</dbReference>
<dbReference type="Gene3D" id="3.90.1800.10">
    <property type="entry name" value="RNA polymerase alpha subunit dimerisation domain"/>
    <property type="match status" value="1"/>
</dbReference>
<dbReference type="Gene3D" id="3.90.1110.10">
    <property type="entry name" value="RNA polymerase Rpb2, domain 2"/>
    <property type="match status" value="1"/>
</dbReference>
<dbReference type="HAMAP" id="MF_01321">
    <property type="entry name" value="RNApol_bact_RpoB"/>
    <property type="match status" value="1"/>
</dbReference>
<dbReference type="InterPro" id="IPR019462">
    <property type="entry name" value="DNA-dir_RNA_pol_bsu_external_1"/>
</dbReference>
<dbReference type="InterPro" id="IPR015712">
    <property type="entry name" value="DNA-dir_RNA_pol_su2"/>
</dbReference>
<dbReference type="InterPro" id="IPR007120">
    <property type="entry name" value="DNA-dir_RNAP_su2_dom"/>
</dbReference>
<dbReference type="InterPro" id="IPR037033">
    <property type="entry name" value="DNA-dir_RNAP_su2_hyb_sf"/>
</dbReference>
<dbReference type="InterPro" id="IPR010243">
    <property type="entry name" value="RNA_pol_bsu_bac"/>
</dbReference>
<dbReference type="InterPro" id="IPR007121">
    <property type="entry name" value="RNA_pol_bsu_CS"/>
</dbReference>
<dbReference type="InterPro" id="IPR007644">
    <property type="entry name" value="RNA_pol_bsu_protrusion"/>
</dbReference>
<dbReference type="InterPro" id="IPR007642">
    <property type="entry name" value="RNA_pol_Rpb2_2"/>
</dbReference>
<dbReference type="InterPro" id="IPR037034">
    <property type="entry name" value="RNA_pol_Rpb2_2_sf"/>
</dbReference>
<dbReference type="InterPro" id="IPR007645">
    <property type="entry name" value="RNA_pol_Rpb2_3"/>
</dbReference>
<dbReference type="InterPro" id="IPR007641">
    <property type="entry name" value="RNA_pol_Rpb2_7"/>
</dbReference>
<dbReference type="InterPro" id="IPR014724">
    <property type="entry name" value="RNA_pol_RPB2_OB-fold"/>
</dbReference>
<dbReference type="NCBIfam" id="NF001616">
    <property type="entry name" value="PRK00405.1"/>
    <property type="match status" value="1"/>
</dbReference>
<dbReference type="NCBIfam" id="TIGR02013">
    <property type="entry name" value="rpoB"/>
    <property type="match status" value="1"/>
</dbReference>
<dbReference type="PANTHER" id="PTHR20856">
    <property type="entry name" value="DNA-DIRECTED RNA POLYMERASE I SUBUNIT 2"/>
    <property type="match status" value="1"/>
</dbReference>
<dbReference type="Pfam" id="PF04563">
    <property type="entry name" value="RNA_pol_Rpb2_1"/>
    <property type="match status" value="1"/>
</dbReference>
<dbReference type="Pfam" id="PF04561">
    <property type="entry name" value="RNA_pol_Rpb2_2"/>
    <property type="match status" value="2"/>
</dbReference>
<dbReference type="Pfam" id="PF04565">
    <property type="entry name" value="RNA_pol_Rpb2_3"/>
    <property type="match status" value="1"/>
</dbReference>
<dbReference type="Pfam" id="PF10385">
    <property type="entry name" value="RNA_pol_Rpb2_45"/>
    <property type="match status" value="1"/>
</dbReference>
<dbReference type="Pfam" id="PF00562">
    <property type="entry name" value="RNA_pol_Rpb2_6"/>
    <property type="match status" value="1"/>
</dbReference>
<dbReference type="Pfam" id="PF04560">
    <property type="entry name" value="RNA_pol_Rpb2_7"/>
    <property type="match status" value="1"/>
</dbReference>
<dbReference type="SUPFAM" id="SSF64484">
    <property type="entry name" value="beta and beta-prime subunits of DNA dependent RNA-polymerase"/>
    <property type="match status" value="1"/>
</dbReference>
<dbReference type="PROSITE" id="PS01166">
    <property type="entry name" value="RNA_POL_BETA"/>
    <property type="match status" value="1"/>
</dbReference>
<keyword id="KW-0240">DNA-directed RNA polymerase</keyword>
<keyword id="KW-0548">Nucleotidyltransferase</keyword>
<keyword id="KW-0804">Transcription</keyword>
<keyword id="KW-0808">Transferase</keyword>
<protein>
    <recommendedName>
        <fullName evidence="1">DNA-directed RNA polymerase subunit beta</fullName>
        <shortName evidence="1">RNAP subunit beta</shortName>
        <ecNumber evidence="1">2.7.7.6</ecNumber>
    </recommendedName>
    <alternativeName>
        <fullName evidence="1">RNA polymerase subunit beta</fullName>
    </alternativeName>
    <alternativeName>
        <fullName evidence="1">Transcriptase subunit beta</fullName>
    </alternativeName>
</protein>
<accession>A4VYU3</accession>
<comment type="function">
    <text evidence="1">DNA-dependent RNA polymerase catalyzes the transcription of DNA into RNA using the four ribonucleoside triphosphates as substrates.</text>
</comment>
<comment type="catalytic activity">
    <reaction evidence="1">
        <text>RNA(n) + a ribonucleoside 5'-triphosphate = RNA(n+1) + diphosphate</text>
        <dbReference type="Rhea" id="RHEA:21248"/>
        <dbReference type="Rhea" id="RHEA-COMP:14527"/>
        <dbReference type="Rhea" id="RHEA-COMP:17342"/>
        <dbReference type="ChEBI" id="CHEBI:33019"/>
        <dbReference type="ChEBI" id="CHEBI:61557"/>
        <dbReference type="ChEBI" id="CHEBI:140395"/>
        <dbReference type="EC" id="2.7.7.6"/>
    </reaction>
</comment>
<comment type="subunit">
    <text evidence="1">The RNAP catalytic core consists of 2 alpha, 1 beta, 1 beta' and 1 omega subunit. When a sigma factor is associated with the core the holoenzyme is formed, which can initiate transcription.</text>
</comment>
<comment type="similarity">
    <text evidence="1">Belongs to the RNA polymerase beta chain family.</text>
</comment>